<name>UCRI_SAISC</name>
<keyword id="KW-0001">2Fe-2S</keyword>
<keyword id="KW-1015">Disulfide bond</keyword>
<keyword id="KW-0249">Electron transport</keyword>
<keyword id="KW-0408">Iron</keyword>
<keyword id="KW-0411">Iron-sulfur</keyword>
<keyword id="KW-0472">Membrane</keyword>
<keyword id="KW-0479">Metal-binding</keyword>
<keyword id="KW-0496">Mitochondrion</keyword>
<keyword id="KW-0999">Mitochondrion inner membrane</keyword>
<keyword id="KW-0679">Respiratory chain</keyword>
<keyword id="KW-0809">Transit peptide</keyword>
<keyword id="KW-1278">Translocase</keyword>
<keyword id="KW-0812">Transmembrane</keyword>
<keyword id="KW-1133">Transmembrane helix</keyword>
<keyword id="KW-0813">Transport</keyword>
<gene>
    <name type="primary">UQCRFS1</name>
</gene>
<accession>Q69BJ7</accession>
<organism>
    <name type="scientific">Saimiri sciureus</name>
    <name type="common">Common squirrel monkey</name>
    <dbReference type="NCBI Taxonomy" id="9521"/>
    <lineage>
        <taxon>Eukaryota</taxon>
        <taxon>Metazoa</taxon>
        <taxon>Chordata</taxon>
        <taxon>Craniata</taxon>
        <taxon>Vertebrata</taxon>
        <taxon>Euteleostomi</taxon>
        <taxon>Mammalia</taxon>
        <taxon>Eutheria</taxon>
        <taxon>Euarchontoglires</taxon>
        <taxon>Primates</taxon>
        <taxon>Haplorrhini</taxon>
        <taxon>Platyrrhini</taxon>
        <taxon>Cebidae</taxon>
        <taxon>Saimiriinae</taxon>
        <taxon>Saimiri</taxon>
    </lineage>
</organism>
<dbReference type="EC" id="7.1.1.8"/>
<dbReference type="EMBL" id="AY387514">
    <property type="protein sequence ID" value="AAR32730.1"/>
    <property type="molecule type" value="Genomic_DNA"/>
</dbReference>
<dbReference type="EMBL" id="AY387513">
    <property type="protein sequence ID" value="AAR32730.1"/>
    <property type="status" value="JOINED"/>
    <property type="molecule type" value="Genomic_DNA"/>
</dbReference>
<dbReference type="GO" id="GO:0005743">
    <property type="term" value="C:mitochondrial inner membrane"/>
    <property type="evidence" value="ECO:0007669"/>
    <property type="project" value="UniProtKB-SubCell"/>
</dbReference>
<dbReference type="GO" id="GO:0005739">
    <property type="term" value="C:mitochondrion"/>
    <property type="evidence" value="ECO:0000250"/>
    <property type="project" value="UniProtKB"/>
</dbReference>
<dbReference type="GO" id="GO:0051537">
    <property type="term" value="F:2 iron, 2 sulfur cluster binding"/>
    <property type="evidence" value="ECO:0007669"/>
    <property type="project" value="UniProtKB-KW"/>
</dbReference>
<dbReference type="GO" id="GO:0046872">
    <property type="term" value="F:metal ion binding"/>
    <property type="evidence" value="ECO:0007669"/>
    <property type="project" value="UniProtKB-KW"/>
</dbReference>
<dbReference type="GO" id="GO:0008121">
    <property type="term" value="F:ubiquinol-cytochrome-c reductase activity"/>
    <property type="evidence" value="ECO:0007669"/>
    <property type="project" value="UniProtKB-EC"/>
</dbReference>
<dbReference type="GO" id="GO:0022904">
    <property type="term" value="P:respiratory electron transport chain"/>
    <property type="evidence" value="ECO:0000250"/>
    <property type="project" value="UniProtKB"/>
</dbReference>
<dbReference type="CDD" id="cd03470">
    <property type="entry name" value="Rieske_cytochrome_bc1"/>
    <property type="match status" value="1"/>
</dbReference>
<dbReference type="FunFam" id="1.20.5.270:FF:000001">
    <property type="entry name" value="Cytochrome b-c1 complex subunit Rieske, mitochondrial"/>
    <property type="match status" value="1"/>
</dbReference>
<dbReference type="FunFam" id="2.10.210.10:FF:000001">
    <property type="entry name" value="Cytochrome b-c1 complex subunit Rieske, mitochondrial"/>
    <property type="match status" value="1"/>
</dbReference>
<dbReference type="FunFam" id="2.102.10.10:FF:000001">
    <property type="entry name" value="Cytochrome b-c1 complex subunit Rieske, mitochondrial"/>
    <property type="match status" value="1"/>
</dbReference>
<dbReference type="Gene3D" id="2.10.210.10">
    <property type="entry name" value="Cytochrome Bc1 Complex, Chain I"/>
    <property type="match status" value="1"/>
</dbReference>
<dbReference type="Gene3D" id="2.102.10.10">
    <property type="entry name" value="Rieske [2Fe-2S] iron-sulphur domain"/>
    <property type="match status" value="1"/>
</dbReference>
<dbReference type="Gene3D" id="1.20.5.270">
    <property type="entry name" value="Ubiquinol cytochrome reductase, transmembrane domain"/>
    <property type="match status" value="1"/>
</dbReference>
<dbReference type="InterPro" id="IPR037008">
    <property type="entry name" value="bc1_Rieske_TM_sf"/>
</dbReference>
<dbReference type="InterPro" id="IPR011070">
    <property type="entry name" value="Globular_prot_asu/bsu"/>
</dbReference>
<dbReference type="InterPro" id="IPR017941">
    <property type="entry name" value="Rieske_2Fe-2S"/>
</dbReference>
<dbReference type="InterPro" id="IPR036922">
    <property type="entry name" value="Rieske_2Fe-2S_sf"/>
</dbReference>
<dbReference type="InterPro" id="IPR014349">
    <property type="entry name" value="Rieske_Fe-S_prot"/>
</dbReference>
<dbReference type="InterPro" id="IPR005805">
    <property type="entry name" value="Rieske_Fe-S_prot_C"/>
</dbReference>
<dbReference type="InterPro" id="IPR004192">
    <property type="entry name" value="Rieske_TM"/>
</dbReference>
<dbReference type="InterPro" id="IPR006317">
    <property type="entry name" value="Ubiquinol_cyt_c_Rdtase_Fe-S-su"/>
</dbReference>
<dbReference type="InterPro" id="IPR015248">
    <property type="entry name" value="UQCRFS1_N"/>
</dbReference>
<dbReference type="NCBIfam" id="TIGR01416">
    <property type="entry name" value="Rieske_proteo"/>
    <property type="match status" value="1"/>
</dbReference>
<dbReference type="PANTHER" id="PTHR10134">
    <property type="entry name" value="CYTOCHROME B-C1 COMPLEX SUBUNIT RIESKE, MITOCHONDRIAL"/>
    <property type="match status" value="1"/>
</dbReference>
<dbReference type="Pfam" id="PF00355">
    <property type="entry name" value="Rieske"/>
    <property type="match status" value="1"/>
</dbReference>
<dbReference type="Pfam" id="PF09165">
    <property type="entry name" value="Ubiq-Cytc-red_N"/>
    <property type="match status" value="1"/>
</dbReference>
<dbReference type="Pfam" id="PF02921">
    <property type="entry name" value="UCR_TM"/>
    <property type="match status" value="1"/>
</dbReference>
<dbReference type="PRINTS" id="PR00162">
    <property type="entry name" value="RIESKE"/>
</dbReference>
<dbReference type="SUPFAM" id="SSF50022">
    <property type="entry name" value="ISP domain"/>
    <property type="match status" value="1"/>
</dbReference>
<dbReference type="SUPFAM" id="SSF81502">
    <property type="entry name" value="ISP transmembrane anchor"/>
    <property type="match status" value="1"/>
</dbReference>
<dbReference type="SUPFAM" id="SSF56568">
    <property type="entry name" value="Non-globular alpha+beta subunits of globular proteins"/>
    <property type="match status" value="1"/>
</dbReference>
<dbReference type="PROSITE" id="PS51296">
    <property type="entry name" value="RIESKE"/>
    <property type="match status" value="1"/>
</dbReference>
<comment type="function">
    <molecule>Cytochrome b-c1 complex subunit Rieske, mitochondrial</molecule>
    <text evidence="1 3">Component of the ubiquinol-cytochrome c oxidoreductase, a multisubunit transmembrane complex that is part of the mitochondrial electron transport chain which drives oxidative phosphorylation. The respiratory chain contains 3 multisubunit complexes succinate dehydrogenase (complex II, CII), ubiquinol-cytochrome c oxidoreductase (cytochrome b-c1 complex, complex III, CIII) and cytochrome c oxidase (complex IV, CIV), that cooperate to transfer electrons derived from NADH and succinate to molecular oxygen, creating an electrochemical gradient over the inner membrane that drives transmembrane transport and the ATP synthase. The cytochrome b-c1 complex catalyzes electron transfer from ubiquinol to cytochrome c, linking this redox reaction to translocation of protons across the mitochondrial inner membrane, with protons being carried across the membrane as hydrogens on the quinol. In the process called Q cycle, 2 protons are consumed from the matrix, 4 protons are released into the intermembrane space and 2 electrons are passed to cytochrome c. The Rieske protein is a catalytic core subunit containing a [2Fe-2S] iron-sulfur cluster. It cycles between 2 conformational states during catalysis to transfer electrons from the quinol bound in the Q(0) site in cytochrome b to cytochrome c1 (By similarity). Incorporation of UQCRFS1 is the penultimate step in complex III assembly (By similarity).</text>
</comment>
<comment type="function">
    <molecule>Cytochrome b-c1 complex subunit 9</molecule>
    <text evidence="2 3 5">Component of the ubiquinol-cytochrome c oxidoreductase (cytochrome b-c1 complex, complex III, CIII). UQCRFS1 undergoes proteolytic processing once it is incorporated in the complex III dimer. One of the fragments, called subunit 9, corresponds to its mitochondrial targeting sequence (MTS) (By similarity). The proteolytic processing is necessary for the correct insertion of UQCRFS1 in the complex III dimer, but the persistence of UQCRFS1-derived fragments may prevent newly imported UQCRFS1 to be processed and assembled into complex III and is detrimental for the complex III structure and function (By similarity).</text>
</comment>
<comment type="catalytic activity">
    <reaction evidence="1">
        <text>a quinol + 2 Fe(III)-[cytochrome c](out) = a quinone + 2 Fe(II)-[cytochrome c](out) + 2 H(+)(out)</text>
        <dbReference type="Rhea" id="RHEA:11484"/>
        <dbReference type="Rhea" id="RHEA-COMP:10350"/>
        <dbReference type="Rhea" id="RHEA-COMP:14399"/>
        <dbReference type="ChEBI" id="CHEBI:15378"/>
        <dbReference type="ChEBI" id="CHEBI:24646"/>
        <dbReference type="ChEBI" id="CHEBI:29033"/>
        <dbReference type="ChEBI" id="CHEBI:29034"/>
        <dbReference type="ChEBI" id="CHEBI:132124"/>
        <dbReference type="EC" id="7.1.1.8"/>
    </reaction>
</comment>
<comment type="cofactor">
    <cofactor evidence="6">
        <name>[2Fe-2S] cluster</name>
        <dbReference type="ChEBI" id="CHEBI:190135"/>
    </cofactor>
    <text evidence="3 6">Binds 1 [2Fe-2S] cluster per subunit. Fe-S cluster delivery to the Rieske protein is mediated by components of the iron sulfur (Fe-S) cluster assembly machinery that reside in the mitochondrial matrix (including HSC20 and LYRM7) (By similarity).</text>
</comment>
<comment type="subunit">
    <molecule>Cytochrome b-c1 complex subunit Rieske, mitochondrial</molecule>
    <text evidence="2 3">Component of the ubiquinol-cytochrome c oxidoreductase (cytochrome b-c1 complex, complex III, CIII), a multisubunit enzyme composed of 11 subunits. The complex is composed of 3 respiratory subunits cytochrome b, cytochrome c1 and Rieske protein UQCRFS1, 2 core protein subunits UQCRC1/QCR1 and UQCRC2/QCR2, and 6 low-molecular weight protein subunits UQCRH/QCR6, UQCRB/QCR7, UQCRQ/QCR8, UQCR10/QCR9, UQCR11/QCR10 and subunit 9, the cleavage product of Rieske protein UQCRFS1. The complex exists as an obligatory dimer and forms supercomplexes (SCs) in the inner mitochondrial membrane with NADH-ubiquinone oxidoreductase (complex I, CI) and cytochrome c oxidase (complex IV, CIV), resulting in different assemblies (supercomplex SCI(1)III(2)IV(1) and megacomplex MCI(2)III(2)IV(2)) (By similarity). Incorporation of the Rieske protein UQCRFS1 is the penultimate step in complex III assembly. Interacts with TTC19, which is involved in the clearance of UQCRFS1 fragments (By similarity).</text>
</comment>
<comment type="subunit">
    <molecule>Cytochrome b-c1 complex subunit 9</molecule>
    <text evidence="2">Component of the ubiquinol-cytochrome c oxidoreductase (cytochrome b-c1 complex, complex III, CIII). Subunit 9 corresponds to the mitochondrial targeting sequence (MTS) of Rieske protein UQCRFS1. It is retained after processing and incorporated inside complex III, where it remains bound to the complex and localizes between the 2 core subunits UQCRC1/QCR1 and UQCRC2/QCR2.</text>
</comment>
<comment type="subcellular location">
    <subcellularLocation>
        <location evidence="4">Mitochondrion inner membrane</location>
        <topology evidence="4">Single-pass membrane protein</topology>
    </subcellularLocation>
</comment>
<comment type="PTM">
    <text evidence="5">Proteolytic processing is necessary for the correct insertion of UQCRFS1 in the complex III dimer. Several fragments are generated during UQCRFS1 insertion, most probably due to the endogenous matrix-processing peptidase (MPP) activity of the 2 core protein subunits UQCRC1/QCR1 and UQCRC2/QCR2, which are homologous to the 2 mitochondrial-processing peptidase (MPP) subunits beta-MPP and alpha-MPP respectively. The action of the protease is also necessary for the clearance of the UQCRFS1 fragments.</text>
</comment>
<comment type="miscellaneous">
    <text>The Rieske protein is a high potential 2Fe-2S protein.</text>
</comment>
<comment type="similarity">
    <text evidence="8">Belongs to the Rieske iron-sulfur protein family.</text>
</comment>
<comment type="caution">
    <text evidence="2 3">Several peptides are generated during UQCRFS1 insertion. According to some authors, the identification of the transit peptide as the subunit 9, does not necessary imply that it must be considered as a structural subunit of the complex III dimer as additional fragments from UQCRFS1 are also present.</text>
</comment>
<sequence>MLSVAARSGPFAPVLSAKSRGVXXXXXXXXXXXXXXTPEPPVLDPKRPILSRESLSGQAARRPLVASVGLNVPASVRYSHTDIKVPDFSDYRRSEVLDKTKSSRESSDARKVFSYMVTATTAVGVTYAAKSIVTQFISSMSASADVLAMSKIEIKLSDIPEGKNMAFKWRGKPLFVRHRTQKEIEQEAAVELSQLRDPQHDLDRVKKPEWMILIGVCTHLGCVPIANAGDFGGYYCPCHGSHYDASGRIRKGPAPLNLEVPTYEFLSDDMVVVG</sequence>
<feature type="chain" id="PRO_0000307249" description="Cytochrome b-c1 complex subunit 9" evidence="5">
    <location>
        <begin position="1"/>
        <end position="78"/>
    </location>
</feature>
<feature type="chain" id="PRO_0000030672" description="Cytochrome b-c1 complex subunit Rieske, mitochondrial">
    <location>
        <begin position="79"/>
        <end position="274"/>
    </location>
</feature>
<feature type="topological domain" description="Mitochondrial matrix" evidence="2">
    <location>
        <begin position="79"/>
        <end position="103"/>
    </location>
</feature>
<feature type="transmembrane region" description="Helical" evidence="2">
    <location>
        <begin position="104"/>
        <end position="140"/>
    </location>
</feature>
<feature type="topological domain" description="Mitochondrial intermembrane" evidence="2">
    <location>
        <begin position="141"/>
        <end position="274"/>
    </location>
</feature>
<feature type="domain" description="Rieske" evidence="6">
    <location>
        <begin position="187"/>
        <end position="272"/>
    </location>
</feature>
<feature type="region of interest" description="Disordered" evidence="7">
    <location>
        <begin position="29"/>
        <end position="49"/>
    </location>
</feature>
<feature type="binding site" evidence="2">
    <location>
        <position position="217"/>
    </location>
    <ligand>
        <name>[2Fe-2S] cluster</name>
        <dbReference type="ChEBI" id="CHEBI:190135"/>
    </ligand>
</feature>
<feature type="binding site" evidence="2">
    <location>
        <position position="219"/>
    </location>
    <ligand>
        <name>[2Fe-2S] cluster</name>
        <dbReference type="ChEBI" id="CHEBI:190135"/>
    </ligand>
</feature>
<feature type="binding site" evidence="2">
    <location>
        <position position="236"/>
    </location>
    <ligand>
        <name>[2Fe-2S] cluster</name>
        <dbReference type="ChEBI" id="CHEBI:190135"/>
    </ligand>
</feature>
<feature type="binding site" evidence="2">
    <location>
        <position position="239"/>
    </location>
    <ligand>
        <name>[2Fe-2S] cluster</name>
        <dbReference type="ChEBI" id="CHEBI:190135"/>
    </ligand>
</feature>
<feature type="binding site" evidence="2">
    <location>
        <position position="241"/>
    </location>
    <ligand>
        <name>[2Fe-2S] cluster</name>
        <dbReference type="ChEBI" id="CHEBI:190135"/>
    </ligand>
</feature>
<feature type="disulfide bond" evidence="2">
    <location>
        <begin position="222"/>
        <end position="238"/>
    </location>
</feature>
<protein>
    <recommendedName>
        <fullName>Cytochrome b-c1 complex subunit Rieske, mitochondrial</fullName>
        <ecNumber>7.1.1.8</ecNumber>
    </recommendedName>
    <alternativeName>
        <fullName>Complex III subunit 5</fullName>
    </alternativeName>
    <alternativeName>
        <fullName>Cytochrome b-c1 complex subunit 5</fullName>
    </alternativeName>
    <alternativeName>
        <fullName>Rieske iron-sulfur protein</fullName>
        <shortName>RISP</shortName>
    </alternativeName>
    <alternativeName>
        <fullName evidence="8">Rieske protein UQCRFS1</fullName>
    </alternativeName>
    <alternativeName>
        <fullName>Ubiquinol-cytochrome c reductase iron-sulfur subunit</fullName>
    </alternativeName>
    <component>
        <recommendedName>
            <fullName evidence="2">Cytochrome b-c1 complex subunit 9</fullName>
            <shortName evidence="2">Su9</shortName>
            <shortName evidence="2">Subunit 9</shortName>
        </recommendedName>
        <alternativeName>
            <fullName evidence="2">8 kDa subunit 9</fullName>
        </alternativeName>
        <alternativeName>
            <fullName>Complex III subunit IX</fullName>
        </alternativeName>
        <alternativeName>
            <fullName>Cytochrome b-c1 complex subunit 11</fullName>
        </alternativeName>
        <alternativeName>
            <fullName>UQCRFS1 mitochondrial targeting sequence</fullName>
            <shortName>UQCRFS1 MTS</shortName>
        </alternativeName>
        <alternativeName>
            <fullName evidence="2">Ubiquinol-cytochrome c reductase 8 kDa protein</fullName>
        </alternativeName>
    </component>
</protein>
<evidence type="ECO:0000250" key="1">
    <source>
        <dbReference type="UniProtKB" id="P08067"/>
    </source>
</evidence>
<evidence type="ECO:0000250" key="2">
    <source>
        <dbReference type="UniProtKB" id="P13272"/>
    </source>
</evidence>
<evidence type="ECO:0000250" key="3">
    <source>
        <dbReference type="UniProtKB" id="P47985"/>
    </source>
</evidence>
<evidence type="ECO:0000250" key="4">
    <source>
        <dbReference type="UniProtKB" id="Q5ZLR5"/>
    </source>
</evidence>
<evidence type="ECO:0000250" key="5">
    <source>
        <dbReference type="UniProtKB" id="Q9CR68"/>
    </source>
</evidence>
<evidence type="ECO:0000255" key="6">
    <source>
        <dbReference type="PROSITE-ProRule" id="PRU00628"/>
    </source>
</evidence>
<evidence type="ECO:0000256" key="7">
    <source>
        <dbReference type="SAM" id="MobiDB-lite"/>
    </source>
</evidence>
<evidence type="ECO:0000305" key="8"/>
<proteinExistence type="inferred from homology"/>
<reference key="1">
    <citation type="submission" date="2003-09" db="EMBL/GenBank/DDBJ databases">
        <title>Molecular evolution of the iron sulfur protein and subunit 9 of complex III of the electron transport chain in primates.</title>
        <authorList>
            <person name="Doan J.W."/>
            <person name="Wildman D.E."/>
            <person name="Schmidt T.R."/>
            <person name="Weiss M.L."/>
            <person name="Goodman M."/>
            <person name="Grossman L.I."/>
        </authorList>
    </citation>
    <scope>NUCLEOTIDE SEQUENCE [GENOMIC DNA]</scope>
</reference>